<sequence>MLQPKRMKFRKMFKGRNRGLANGTEVSFGTFGLKAVGRGRLTARQIESARRAMTRHIKRQGQIWIRVFPDKPITSKPLEVRMGKGKGNVEYWVCQIQPGKVLYEMNGVSEVIAREAFALAAAKLPIKTTFVTKTVM</sequence>
<feature type="chain" id="PRO_0000062195" description="Large ribosomal subunit protein uL16">
    <location>
        <begin position="1"/>
        <end position="136"/>
    </location>
</feature>
<evidence type="ECO:0000255" key="1">
    <source>
        <dbReference type="HAMAP-Rule" id="MF_01342"/>
    </source>
</evidence>
<evidence type="ECO:0000305" key="2"/>
<proteinExistence type="inferred from homology"/>
<reference key="1">
    <citation type="journal article" date="2002" name="Nat. Biotechnol.">
        <title>Genome sequence of the dissimilatory metal ion-reducing bacterium Shewanella oneidensis.</title>
        <authorList>
            <person name="Heidelberg J.F."/>
            <person name="Paulsen I.T."/>
            <person name="Nelson K.E."/>
            <person name="Gaidos E.J."/>
            <person name="Nelson W.C."/>
            <person name="Read T.D."/>
            <person name="Eisen J.A."/>
            <person name="Seshadri R."/>
            <person name="Ward N.L."/>
            <person name="Methe B.A."/>
            <person name="Clayton R.A."/>
            <person name="Meyer T."/>
            <person name="Tsapin A."/>
            <person name="Scott J."/>
            <person name="Beanan M.J."/>
            <person name="Brinkac L.M."/>
            <person name="Daugherty S.C."/>
            <person name="DeBoy R.T."/>
            <person name="Dodson R.J."/>
            <person name="Durkin A.S."/>
            <person name="Haft D.H."/>
            <person name="Kolonay J.F."/>
            <person name="Madupu R."/>
            <person name="Peterson J.D."/>
            <person name="Umayam L.A."/>
            <person name="White O."/>
            <person name="Wolf A.M."/>
            <person name="Vamathevan J.J."/>
            <person name="Weidman J.F."/>
            <person name="Impraim M."/>
            <person name="Lee K."/>
            <person name="Berry K.J."/>
            <person name="Lee C."/>
            <person name="Mueller J."/>
            <person name="Khouri H.M."/>
            <person name="Gill J."/>
            <person name="Utterback T.R."/>
            <person name="McDonald L.A."/>
            <person name="Feldblyum T.V."/>
            <person name="Smith H.O."/>
            <person name="Venter J.C."/>
            <person name="Nealson K.H."/>
            <person name="Fraser C.M."/>
        </authorList>
    </citation>
    <scope>NUCLEOTIDE SEQUENCE [LARGE SCALE GENOMIC DNA]</scope>
    <source>
        <strain>ATCC 700550 / JCM 31522 / CIP 106686 / LMG 19005 / NCIMB 14063 / MR-1</strain>
    </source>
</reference>
<comment type="function">
    <text evidence="1">Binds 23S rRNA and is also seen to make contacts with the A and possibly P site tRNAs.</text>
</comment>
<comment type="subunit">
    <text evidence="1">Part of the 50S ribosomal subunit.</text>
</comment>
<comment type="similarity">
    <text evidence="1">Belongs to the universal ribosomal protein uL16 family.</text>
</comment>
<keyword id="KW-1185">Reference proteome</keyword>
<keyword id="KW-0687">Ribonucleoprotein</keyword>
<keyword id="KW-0689">Ribosomal protein</keyword>
<keyword id="KW-0694">RNA-binding</keyword>
<keyword id="KW-0699">rRNA-binding</keyword>
<keyword id="KW-0820">tRNA-binding</keyword>
<accession>Q8EK62</accession>
<dbReference type="EMBL" id="AE014299">
    <property type="protein sequence ID" value="AAN53323.1"/>
    <property type="molecule type" value="Genomic_DNA"/>
</dbReference>
<dbReference type="RefSeq" id="NP_715878.1">
    <property type="nucleotide sequence ID" value="NC_004347.2"/>
</dbReference>
<dbReference type="RefSeq" id="WP_006083593.1">
    <property type="nucleotide sequence ID" value="NZ_CP053946.1"/>
</dbReference>
<dbReference type="SMR" id="Q8EK62"/>
<dbReference type="STRING" id="211586.SO_0238"/>
<dbReference type="PaxDb" id="211586-SO_0238"/>
<dbReference type="GeneID" id="94726193"/>
<dbReference type="KEGG" id="son:SO_0238"/>
<dbReference type="PATRIC" id="fig|211586.12.peg.226"/>
<dbReference type="eggNOG" id="COG0197">
    <property type="taxonomic scope" value="Bacteria"/>
</dbReference>
<dbReference type="HOGENOM" id="CLU_078858_2_1_6"/>
<dbReference type="OrthoDB" id="9802589at2"/>
<dbReference type="PhylomeDB" id="Q8EK62"/>
<dbReference type="BioCyc" id="SONE211586:G1GMP-227-MONOMER"/>
<dbReference type="PRO" id="PR:Q8EK62"/>
<dbReference type="Proteomes" id="UP000008186">
    <property type="component" value="Chromosome"/>
</dbReference>
<dbReference type="GO" id="GO:0022625">
    <property type="term" value="C:cytosolic large ribosomal subunit"/>
    <property type="evidence" value="ECO:0000318"/>
    <property type="project" value="GO_Central"/>
</dbReference>
<dbReference type="GO" id="GO:0019843">
    <property type="term" value="F:rRNA binding"/>
    <property type="evidence" value="ECO:0000318"/>
    <property type="project" value="GO_Central"/>
</dbReference>
<dbReference type="GO" id="GO:0003735">
    <property type="term" value="F:structural constituent of ribosome"/>
    <property type="evidence" value="ECO:0000318"/>
    <property type="project" value="GO_Central"/>
</dbReference>
<dbReference type="GO" id="GO:0000049">
    <property type="term" value="F:tRNA binding"/>
    <property type="evidence" value="ECO:0007669"/>
    <property type="project" value="UniProtKB-KW"/>
</dbReference>
<dbReference type="GO" id="GO:0006412">
    <property type="term" value="P:translation"/>
    <property type="evidence" value="ECO:0007669"/>
    <property type="project" value="UniProtKB-UniRule"/>
</dbReference>
<dbReference type="CDD" id="cd01433">
    <property type="entry name" value="Ribosomal_L16_L10e"/>
    <property type="match status" value="1"/>
</dbReference>
<dbReference type="FunFam" id="3.90.1170.10:FF:000001">
    <property type="entry name" value="50S ribosomal protein L16"/>
    <property type="match status" value="1"/>
</dbReference>
<dbReference type="Gene3D" id="3.90.1170.10">
    <property type="entry name" value="Ribosomal protein L10e/L16"/>
    <property type="match status" value="1"/>
</dbReference>
<dbReference type="HAMAP" id="MF_01342">
    <property type="entry name" value="Ribosomal_uL16"/>
    <property type="match status" value="1"/>
</dbReference>
<dbReference type="InterPro" id="IPR047873">
    <property type="entry name" value="Ribosomal_uL16"/>
</dbReference>
<dbReference type="InterPro" id="IPR000114">
    <property type="entry name" value="Ribosomal_uL16_bact-type"/>
</dbReference>
<dbReference type="InterPro" id="IPR020798">
    <property type="entry name" value="Ribosomal_uL16_CS"/>
</dbReference>
<dbReference type="InterPro" id="IPR016180">
    <property type="entry name" value="Ribosomal_uL16_dom"/>
</dbReference>
<dbReference type="InterPro" id="IPR036920">
    <property type="entry name" value="Ribosomal_uL16_sf"/>
</dbReference>
<dbReference type="NCBIfam" id="TIGR01164">
    <property type="entry name" value="rplP_bact"/>
    <property type="match status" value="1"/>
</dbReference>
<dbReference type="PANTHER" id="PTHR12220">
    <property type="entry name" value="50S/60S RIBOSOMAL PROTEIN L16"/>
    <property type="match status" value="1"/>
</dbReference>
<dbReference type="PANTHER" id="PTHR12220:SF13">
    <property type="entry name" value="LARGE RIBOSOMAL SUBUNIT PROTEIN UL16M"/>
    <property type="match status" value="1"/>
</dbReference>
<dbReference type="Pfam" id="PF00252">
    <property type="entry name" value="Ribosomal_L16"/>
    <property type="match status" value="1"/>
</dbReference>
<dbReference type="PRINTS" id="PR00060">
    <property type="entry name" value="RIBOSOMALL16"/>
</dbReference>
<dbReference type="SUPFAM" id="SSF54686">
    <property type="entry name" value="Ribosomal protein L16p/L10e"/>
    <property type="match status" value="1"/>
</dbReference>
<dbReference type="PROSITE" id="PS00586">
    <property type="entry name" value="RIBOSOMAL_L16_1"/>
    <property type="match status" value="1"/>
</dbReference>
<dbReference type="PROSITE" id="PS00701">
    <property type="entry name" value="RIBOSOMAL_L16_2"/>
    <property type="match status" value="1"/>
</dbReference>
<protein>
    <recommendedName>
        <fullName evidence="1">Large ribosomal subunit protein uL16</fullName>
    </recommendedName>
    <alternativeName>
        <fullName evidence="2">50S ribosomal protein L16</fullName>
    </alternativeName>
</protein>
<organism>
    <name type="scientific">Shewanella oneidensis (strain ATCC 700550 / JCM 31522 / CIP 106686 / LMG 19005 / NCIMB 14063 / MR-1)</name>
    <dbReference type="NCBI Taxonomy" id="211586"/>
    <lineage>
        <taxon>Bacteria</taxon>
        <taxon>Pseudomonadati</taxon>
        <taxon>Pseudomonadota</taxon>
        <taxon>Gammaproteobacteria</taxon>
        <taxon>Alteromonadales</taxon>
        <taxon>Shewanellaceae</taxon>
        <taxon>Shewanella</taxon>
    </lineage>
</organism>
<name>RL16_SHEON</name>
<gene>
    <name evidence="1" type="primary">rplP</name>
    <name type="ordered locus">SO_0238</name>
</gene>